<evidence type="ECO:0000250" key="1">
    <source>
        <dbReference type="UniProtKB" id="Q9WZ49"/>
    </source>
</evidence>
<evidence type="ECO:0000250" key="2">
    <source>
        <dbReference type="UniProtKB" id="Q9Y4W6"/>
    </source>
</evidence>
<evidence type="ECO:0000255" key="3"/>
<evidence type="ECO:0000256" key="4">
    <source>
        <dbReference type="SAM" id="MobiDB-lite"/>
    </source>
</evidence>
<evidence type="ECO:0000269" key="5">
    <source>
    </source>
</evidence>
<evidence type="ECO:0000269" key="6">
    <source>
    </source>
</evidence>
<evidence type="ECO:0000269" key="7">
    <source>
    </source>
</evidence>
<evidence type="ECO:0000269" key="8">
    <source>
    </source>
</evidence>
<evidence type="ECO:0000269" key="9">
    <source>
    </source>
</evidence>
<evidence type="ECO:0000269" key="10">
    <source>
    </source>
</evidence>
<evidence type="ECO:0000269" key="11">
    <source>
    </source>
</evidence>
<evidence type="ECO:0000269" key="12">
    <source>
    </source>
</evidence>
<evidence type="ECO:0000269" key="13">
    <source>
    </source>
</evidence>
<evidence type="ECO:0000269" key="14">
    <source>
    </source>
</evidence>
<evidence type="ECO:0000269" key="15">
    <source>
    </source>
</evidence>
<evidence type="ECO:0000303" key="16">
    <source>
    </source>
</evidence>
<evidence type="ECO:0000303" key="17">
    <source>
    </source>
</evidence>
<evidence type="ECO:0000305" key="18"/>
<evidence type="ECO:0000312" key="19">
    <source>
        <dbReference type="SGD" id="S000000819"/>
    </source>
</evidence>
<reference key="1">
    <citation type="journal article" date="1994" name="Yeast">
        <title>Identification of a set of yeast genes coding for a novel family of putative ATPases with high similarity to constituents of the 26S protease complex.</title>
        <authorList>
            <person name="Schnall R."/>
            <person name="Mannhaupt G."/>
            <person name="Stucka R."/>
            <person name="Tauer R."/>
            <person name="Ehnle S."/>
            <person name="Schwarzlose C."/>
            <person name="Vetter I."/>
            <person name="Feldmann H."/>
        </authorList>
    </citation>
    <scope>NUCLEOTIDE SEQUENCE [GENOMIC DNA]</scope>
    <source>
        <strain>ATCC 204508 / S288c</strain>
    </source>
</reference>
<reference key="2">
    <citation type="journal article" date="1994" name="Yeast">
        <title>Sequence of the AFG3 gene encoding a new member of the FtsH/Yme1/Tma subfamily of the AAA-protein family.</title>
        <authorList>
            <person name="Guelin E.J.M."/>
            <person name="Rep M."/>
            <person name="Grivell L.A."/>
        </authorList>
    </citation>
    <scope>NUCLEOTIDE SEQUENCE [GENOMIC DNA]</scope>
    <source>
        <strain>S288c / YPH1</strain>
    </source>
</reference>
<reference key="3">
    <citation type="journal article" date="1997" name="Nature">
        <title>The nucleotide sequence of Saccharomyces cerevisiae chromosome V.</title>
        <authorList>
            <person name="Dietrich F.S."/>
            <person name="Mulligan J.T."/>
            <person name="Hennessy K.M."/>
            <person name="Yelton M.A."/>
            <person name="Allen E."/>
            <person name="Araujo R."/>
            <person name="Aviles E."/>
            <person name="Berno A."/>
            <person name="Brennan T."/>
            <person name="Carpenter J."/>
            <person name="Chen E."/>
            <person name="Cherry J.M."/>
            <person name="Chung E."/>
            <person name="Duncan M."/>
            <person name="Guzman E."/>
            <person name="Hartzell G."/>
            <person name="Hunicke-Smith S."/>
            <person name="Hyman R.W."/>
            <person name="Kayser A."/>
            <person name="Komp C."/>
            <person name="Lashkari D."/>
            <person name="Lew H."/>
            <person name="Lin D."/>
            <person name="Mosedale D."/>
            <person name="Nakahara K."/>
            <person name="Namath A."/>
            <person name="Norgren R."/>
            <person name="Oefner P."/>
            <person name="Oh C."/>
            <person name="Petel F.X."/>
            <person name="Roberts D."/>
            <person name="Sehl P."/>
            <person name="Schramm S."/>
            <person name="Shogren T."/>
            <person name="Smith V."/>
            <person name="Taylor P."/>
            <person name="Wei Y."/>
            <person name="Botstein D."/>
            <person name="Davis R.W."/>
        </authorList>
    </citation>
    <scope>NUCLEOTIDE SEQUENCE [LARGE SCALE GENOMIC DNA]</scope>
    <source>
        <strain>ATCC 204508 / S288c</strain>
    </source>
</reference>
<reference key="4">
    <citation type="journal article" date="2014" name="G3 (Bethesda)">
        <title>The reference genome sequence of Saccharomyces cerevisiae: Then and now.</title>
        <authorList>
            <person name="Engel S.R."/>
            <person name="Dietrich F.S."/>
            <person name="Fisk D.G."/>
            <person name="Binkley G."/>
            <person name="Balakrishnan R."/>
            <person name="Costanzo M.C."/>
            <person name="Dwight S.S."/>
            <person name="Hitz B.C."/>
            <person name="Karra K."/>
            <person name="Nash R.S."/>
            <person name="Weng S."/>
            <person name="Wong E.D."/>
            <person name="Lloyd P."/>
            <person name="Skrzypek M.S."/>
            <person name="Miyasato S.R."/>
            <person name="Simison M."/>
            <person name="Cherry J.M."/>
        </authorList>
    </citation>
    <scope>GENOME REANNOTATION</scope>
    <source>
        <strain>ATCC 204508 / S288c</strain>
    </source>
</reference>
<reference key="5">
    <citation type="journal article" date="1996" name="Cell">
        <title>The YTA10-12 complex, an AAA protease with chaperone-like activity in the inner membrane of mitochondria.</title>
        <authorList>
            <person name="Arlt H."/>
            <person name="Tauer R."/>
            <person name="Feldmann H."/>
            <person name="Neupert W."/>
            <person name="Langer T."/>
        </authorList>
    </citation>
    <scope>IDENTIFICATION IN THE M-AAA PROTEASE COMPLEX</scope>
    <scope>FUNCTION OF THE M-AAA PROTEASE COMPLEX</scope>
    <scope>SUBCELLULAR LOCATION</scope>
    <scope>TOPOLOGY</scope>
</reference>
<reference key="6">
    <citation type="journal article" date="1998" name="EMBO J.">
        <title>The formation of respiratory chain complexes in mitochondria is under the proteolytic control of the m-AAA protease.</title>
        <authorList>
            <person name="Arlt H."/>
            <person name="Steglich G."/>
            <person name="Perryman R."/>
            <person name="Guiard B."/>
            <person name="Neupert W."/>
            <person name="Langer T."/>
        </authorList>
    </citation>
    <scope>FUNCTION OF THE M-AAA PROTEASE COMPLEX</scope>
    <scope>MUTAGENESIS OF GLU-559</scope>
</reference>
<reference key="7">
    <citation type="journal article" date="1999" name="Mol. Cell. Biol.">
        <title>Prohibitins regulate membrane protein degradation by the m-AAA protease in mitochondria.</title>
        <authorList>
            <person name="Steglich G."/>
            <person name="Neupert W."/>
            <person name="Langer T."/>
        </authorList>
    </citation>
    <scope>INTERACTION WITH PHB1 AND PHB2</scope>
</reference>
<reference key="8">
    <citation type="journal article" date="2002" name="J. Mol. Biol.">
        <title>A novel two-step mechanism for removal of a mitochondrial signal sequence involves the mAAA complex and the putative rhomboid protease Pcp1.</title>
        <authorList>
            <person name="Esser K."/>
            <person name="Tursun B."/>
            <person name="Ingenhoven M."/>
            <person name="Michaelis G."/>
            <person name="Pratje E."/>
        </authorList>
    </citation>
    <scope>FUNCTION</scope>
</reference>
<reference key="9">
    <citation type="journal article" date="2003" name="Nature">
        <title>Global analysis of protein expression in yeast.</title>
        <authorList>
            <person name="Ghaemmaghami S."/>
            <person name="Huh W.-K."/>
            <person name="Bower K."/>
            <person name="Howson R.W."/>
            <person name="Belle A."/>
            <person name="Dephoure N."/>
            <person name="O'Shea E.K."/>
            <person name="Weissman J.S."/>
        </authorList>
    </citation>
    <scope>LEVEL OF PROTEIN EXPRESSION [LARGE SCALE ANALYSIS]</scope>
</reference>
<reference key="10">
    <citation type="journal article" date="2005" name="Cell">
        <title>The m-AAA protease defective in hereditary spastic paraplegia controls ribosome assembly in mitochondria.</title>
        <authorList>
            <person name="Nolden M."/>
            <person name="Ehses S."/>
            <person name="Koppen M."/>
            <person name="Bernacchia A."/>
            <person name="Rugarli E.I."/>
            <person name="Langer T."/>
        </authorList>
    </citation>
    <scope>FUNCTION</scope>
</reference>
<reference key="11">
    <citation type="journal article" date="2007" name="EMBO J.">
        <title>m-AAA protease-driven membrane dislocation allows intramembrane cleavage by rhomboid in mitochondria.</title>
        <authorList>
            <person name="Tatsuta T."/>
            <person name="Augustin S."/>
            <person name="Nolden M."/>
            <person name="Friedrichs B."/>
            <person name="Langer T."/>
        </authorList>
    </citation>
    <scope>FUNCTION</scope>
    <scope>CATALYTIC ACTIVITY</scope>
    <scope>MUTAGENESIS OF LYS-334; MET-360; PHE-361; GLY-363; GLU-559 AND ASP-634</scope>
</reference>
<reference key="12">
    <citation type="journal article" date="2009" name="Mol. Cell">
        <title>An intersubunit signaling network coordinates ATP hydrolysis by m-AAA proteases.</title>
        <authorList>
            <person name="Augustin S."/>
            <person name="Gerdes F."/>
            <person name="Lee S."/>
            <person name="Tsai F.T."/>
            <person name="Langer T."/>
            <person name="Tatsuta T."/>
        </authorList>
    </citation>
    <scope>FUNCTION</scope>
    <scope>CATALYTIC ACTIVITY</scope>
    <scope>ACTIVITY REGULATION</scope>
    <scope>SUBUNIT</scope>
    <scope>MUTAGENESIS OF LYS-334; GLU-388 AND ARG-447</scope>
</reference>
<reference key="13">
    <citation type="journal article" date="2011" name="EMBO J.">
        <title>Presequence-dependent folding ensures MrpL32 processing by the m-AAA protease in mitochondria.</title>
        <authorList>
            <person name="Bonn F."/>
            <person name="Tatsuta T."/>
            <person name="Petrungaro C."/>
            <person name="Riemer J."/>
            <person name="Langer T."/>
        </authorList>
    </citation>
    <scope>FUNCTION</scope>
</reference>
<reference key="14">
    <citation type="journal article" date="2013" name="J. Biol. Chem.">
        <title>Dislocation by the m-AAA protease increases the threshold hydrophobicity for retention of transmembrane helices in the inner membrane of yeast mitochondria.</title>
        <authorList>
            <person name="Botelho S.C."/>
            <person name="Tatsuta T."/>
            <person name="von Heijne G."/>
            <person name="Kim H."/>
        </authorList>
    </citation>
    <scope>FUNCTION</scope>
</reference>
<reference key="15">
    <citation type="journal article" date="2017" name="J. Biol. Chem.">
        <title>Molecular insights into the m-AAA protease-mediated dislocation of transmembrane helices in the mitochondrial inner membrane.</title>
        <authorList>
            <person name="Lee S."/>
            <person name="Lee H."/>
            <person name="Yoo S."/>
            <person name="Kim H."/>
        </authorList>
    </citation>
    <scope>FUNCTION</scope>
</reference>
<dbReference type="EC" id="3.4.24.-" evidence="10 14"/>
<dbReference type="EC" id="3.6.-.-" evidence="9 10"/>
<dbReference type="EMBL" id="X81066">
    <property type="protein sequence ID" value="CAA56953.1"/>
    <property type="molecule type" value="Genomic_DNA"/>
</dbReference>
<dbReference type="EMBL" id="X76643">
    <property type="protein sequence ID" value="CAA54091.1"/>
    <property type="molecule type" value="Genomic_DNA"/>
</dbReference>
<dbReference type="EMBL" id="U18778">
    <property type="protein sequence ID" value="AAB64550.1"/>
    <property type="molecule type" value="Genomic_DNA"/>
</dbReference>
<dbReference type="EMBL" id="BK006939">
    <property type="protein sequence ID" value="DAA07669.1"/>
    <property type="molecule type" value="Genomic_DNA"/>
</dbReference>
<dbReference type="PIR" id="S46611">
    <property type="entry name" value="S46611"/>
</dbReference>
<dbReference type="RefSeq" id="NP_010933.1">
    <property type="nucleotide sequence ID" value="NM_001178908.1"/>
</dbReference>
<dbReference type="SMR" id="P39925"/>
<dbReference type="BioGRID" id="36750">
    <property type="interactions" value="207"/>
</dbReference>
<dbReference type="ComplexPortal" id="CPX-1654">
    <property type="entry name" value="m-AAA protease complex"/>
</dbReference>
<dbReference type="DIP" id="DIP-802N"/>
<dbReference type="FunCoup" id="P39925">
    <property type="interactions" value="578"/>
</dbReference>
<dbReference type="IntAct" id="P39925">
    <property type="interactions" value="46"/>
</dbReference>
<dbReference type="MINT" id="P39925"/>
<dbReference type="STRING" id="4932.YER017C"/>
<dbReference type="MEROPS" id="M41.002"/>
<dbReference type="TCDB" id="3.A.29.1.1">
    <property type="family name" value="the mitochondrial inner membrane i-aaa protease complex (mimp) family"/>
</dbReference>
<dbReference type="iPTMnet" id="P39925"/>
<dbReference type="PaxDb" id="4932-YER017C"/>
<dbReference type="PeptideAtlas" id="P39925"/>
<dbReference type="EnsemblFungi" id="YER017C_mRNA">
    <property type="protein sequence ID" value="YER017C"/>
    <property type="gene ID" value="YER017C"/>
</dbReference>
<dbReference type="GeneID" id="856737"/>
<dbReference type="KEGG" id="sce:YER017C"/>
<dbReference type="AGR" id="SGD:S000000819"/>
<dbReference type="SGD" id="S000000819">
    <property type="gene designation" value="AFG3"/>
</dbReference>
<dbReference type="VEuPathDB" id="FungiDB:YER017C"/>
<dbReference type="eggNOG" id="KOG0731">
    <property type="taxonomic scope" value="Eukaryota"/>
</dbReference>
<dbReference type="GeneTree" id="ENSGT00940000173525"/>
<dbReference type="HOGENOM" id="CLU_000688_16_2_1"/>
<dbReference type="InParanoid" id="P39925"/>
<dbReference type="OMA" id="YDKQGGG"/>
<dbReference type="OrthoDB" id="1413014at2759"/>
<dbReference type="BioCyc" id="YEAST:G3O-30202-MONOMER"/>
<dbReference type="Reactome" id="R-SCE-9837999">
    <property type="pathway name" value="Mitochondrial protein degradation"/>
</dbReference>
<dbReference type="BioGRID-ORCS" id="856737">
    <property type="hits" value="0 hits in 10 CRISPR screens"/>
</dbReference>
<dbReference type="PRO" id="PR:P39925"/>
<dbReference type="Proteomes" id="UP000002311">
    <property type="component" value="Chromosome V"/>
</dbReference>
<dbReference type="RNAct" id="P39925">
    <property type="molecule type" value="protein"/>
</dbReference>
<dbReference type="GO" id="GO:0005745">
    <property type="term" value="C:m-AAA complex"/>
    <property type="evidence" value="ECO:0000314"/>
    <property type="project" value="SGD"/>
</dbReference>
<dbReference type="GO" id="GO:0097002">
    <property type="term" value="C:mitochondrial inner boundary membrane"/>
    <property type="evidence" value="ECO:0000314"/>
    <property type="project" value="SGD"/>
</dbReference>
<dbReference type="GO" id="GO:0005743">
    <property type="term" value="C:mitochondrial inner membrane"/>
    <property type="evidence" value="ECO:0000314"/>
    <property type="project" value="SGD"/>
</dbReference>
<dbReference type="GO" id="GO:0005739">
    <property type="term" value="C:mitochondrion"/>
    <property type="evidence" value="ECO:0007005"/>
    <property type="project" value="SGD"/>
</dbReference>
<dbReference type="GO" id="GO:0005524">
    <property type="term" value="F:ATP binding"/>
    <property type="evidence" value="ECO:0007669"/>
    <property type="project" value="UniProtKB-KW"/>
</dbReference>
<dbReference type="GO" id="GO:0016887">
    <property type="term" value="F:ATP hydrolysis activity"/>
    <property type="evidence" value="ECO:0000314"/>
    <property type="project" value="SGD"/>
</dbReference>
<dbReference type="GO" id="GO:0004176">
    <property type="term" value="F:ATP-dependent peptidase activity"/>
    <property type="evidence" value="ECO:0007669"/>
    <property type="project" value="InterPro"/>
</dbReference>
<dbReference type="GO" id="GO:0140567">
    <property type="term" value="F:membrane protein dislocase activity"/>
    <property type="evidence" value="ECO:0000314"/>
    <property type="project" value="UniProtKB"/>
</dbReference>
<dbReference type="GO" id="GO:0004222">
    <property type="term" value="F:metalloendopeptidase activity"/>
    <property type="evidence" value="ECO:0000318"/>
    <property type="project" value="GO_Central"/>
</dbReference>
<dbReference type="GO" id="GO:0008237">
    <property type="term" value="F:metallopeptidase activity"/>
    <property type="evidence" value="ECO:0000314"/>
    <property type="project" value="UniProtKB"/>
</dbReference>
<dbReference type="GO" id="GO:0008270">
    <property type="term" value="F:zinc ion binding"/>
    <property type="evidence" value="ECO:0007669"/>
    <property type="project" value="InterPro"/>
</dbReference>
<dbReference type="GO" id="GO:0034982">
    <property type="term" value="P:mitochondrial protein processing"/>
    <property type="evidence" value="ECO:0000318"/>
    <property type="project" value="GO_Central"/>
</dbReference>
<dbReference type="GO" id="GO:0030163">
    <property type="term" value="P:protein catabolic process"/>
    <property type="evidence" value="ECO:0000314"/>
    <property type="project" value="ComplexPortal"/>
</dbReference>
<dbReference type="GO" id="GO:0030150">
    <property type="term" value="P:protein import into mitochondrial matrix"/>
    <property type="evidence" value="ECO:0000315"/>
    <property type="project" value="SGD"/>
</dbReference>
<dbReference type="GO" id="GO:0051604">
    <property type="term" value="P:protein maturation"/>
    <property type="evidence" value="ECO:0000314"/>
    <property type="project" value="UniProtKB"/>
</dbReference>
<dbReference type="GO" id="GO:0065003">
    <property type="term" value="P:protein-containing complex assembly"/>
    <property type="evidence" value="ECO:0000314"/>
    <property type="project" value="ComplexPortal"/>
</dbReference>
<dbReference type="GO" id="GO:0006465">
    <property type="term" value="P:signal peptide processing"/>
    <property type="evidence" value="ECO:0000315"/>
    <property type="project" value="SGD"/>
</dbReference>
<dbReference type="CDD" id="cd19501">
    <property type="entry name" value="RecA-like_FtsH"/>
    <property type="match status" value="1"/>
</dbReference>
<dbReference type="FunFam" id="1.20.58.760:FF:000003">
    <property type="entry name" value="AFG3-like AAA ATPase 2"/>
    <property type="match status" value="1"/>
</dbReference>
<dbReference type="FunFam" id="1.10.8.60:FF:000151">
    <property type="entry name" value="ATP dependent metalloprotease"/>
    <property type="match status" value="1"/>
</dbReference>
<dbReference type="FunFam" id="3.40.1690.20:FF:000007">
    <property type="entry name" value="ATP dependent metalloprotease"/>
    <property type="match status" value="1"/>
</dbReference>
<dbReference type="FunFam" id="3.40.50.300:FF:000001">
    <property type="entry name" value="ATP-dependent zinc metalloprotease FtsH"/>
    <property type="match status" value="1"/>
</dbReference>
<dbReference type="Gene3D" id="1.10.8.60">
    <property type="match status" value="1"/>
</dbReference>
<dbReference type="Gene3D" id="3.40.1690.20">
    <property type="match status" value="1"/>
</dbReference>
<dbReference type="Gene3D" id="3.40.50.300">
    <property type="entry name" value="P-loop containing nucleotide triphosphate hydrolases"/>
    <property type="match status" value="1"/>
</dbReference>
<dbReference type="Gene3D" id="1.20.58.760">
    <property type="entry name" value="Peptidase M41"/>
    <property type="match status" value="1"/>
</dbReference>
<dbReference type="HAMAP" id="MF_01458">
    <property type="entry name" value="FtsH"/>
    <property type="match status" value="1"/>
</dbReference>
<dbReference type="InterPro" id="IPR003593">
    <property type="entry name" value="AAA+_ATPase"/>
</dbReference>
<dbReference type="InterPro" id="IPR041569">
    <property type="entry name" value="AAA_lid_3"/>
</dbReference>
<dbReference type="InterPro" id="IPR050928">
    <property type="entry name" value="ATP-dep_Zn_Metalloprotease"/>
</dbReference>
<dbReference type="InterPro" id="IPR003959">
    <property type="entry name" value="ATPase_AAA_core"/>
</dbReference>
<dbReference type="InterPro" id="IPR003960">
    <property type="entry name" value="ATPase_AAA_CS"/>
</dbReference>
<dbReference type="InterPro" id="IPR005936">
    <property type="entry name" value="FtsH"/>
</dbReference>
<dbReference type="InterPro" id="IPR027417">
    <property type="entry name" value="P-loop_NTPase"/>
</dbReference>
<dbReference type="InterPro" id="IPR011546">
    <property type="entry name" value="Pept_M41_FtsH_extracell"/>
</dbReference>
<dbReference type="InterPro" id="IPR000642">
    <property type="entry name" value="Peptidase_M41"/>
</dbReference>
<dbReference type="InterPro" id="IPR037219">
    <property type="entry name" value="Peptidase_M41-like"/>
</dbReference>
<dbReference type="NCBIfam" id="TIGR01241">
    <property type="entry name" value="FtsH_fam"/>
    <property type="match status" value="1"/>
</dbReference>
<dbReference type="PANTHER" id="PTHR43655:SF2">
    <property type="entry name" value="AFG3 LIKE MATRIX AAA PEPTIDASE SUBUNIT 2, ISOFORM A"/>
    <property type="match status" value="1"/>
</dbReference>
<dbReference type="PANTHER" id="PTHR43655">
    <property type="entry name" value="ATP-DEPENDENT PROTEASE"/>
    <property type="match status" value="1"/>
</dbReference>
<dbReference type="Pfam" id="PF00004">
    <property type="entry name" value="AAA"/>
    <property type="match status" value="1"/>
</dbReference>
<dbReference type="Pfam" id="PF17862">
    <property type="entry name" value="AAA_lid_3"/>
    <property type="match status" value="1"/>
</dbReference>
<dbReference type="Pfam" id="PF06480">
    <property type="entry name" value="FtsH_ext"/>
    <property type="match status" value="1"/>
</dbReference>
<dbReference type="Pfam" id="PF01434">
    <property type="entry name" value="Peptidase_M41"/>
    <property type="match status" value="1"/>
</dbReference>
<dbReference type="SMART" id="SM00382">
    <property type="entry name" value="AAA"/>
    <property type="match status" value="1"/>
</dbReference>
<dbReference type="SUPFAM" id="SSF140990">
    <property type="entry name" value="FtsH protease domain-like"/>
    <property type="match status" value="1"/>
</dbReference>
<dbReference type="SUPFAM" id="SSF52540">
    <property type="entry name" value="P-loop containing nucleoside triphosphate hydrolases"/>
    <property type="match status" value="1"/>
</dbReference>
<dbReference type="PROSITE" id="PS00674">
    <property type="entry name" value="AAA"/>
    <property type="match status" value="1"/>
</dbReference>
<comment type="function">
    <text evidence="6 8 9 10 11 12 13 14 15">Catalytic component of the m-AAA protease, a protease that plays a key role in proteostasis of inner mitochondrial membrane proteins (PubMed:19748354, PubMed:8681382). YTA10/AFG3 possesses both ATPase and protease activities: the ATPase activity is required to unfold substrates, threading them into the internal proteolytic cavity for hydrolysis into small peptide fragments (PubMed:19748354). The complex is necessary for the assembly of mitochondrial respiratory chain and ATPase complexes (PubMed:9707443). The m-AAA protease carries out protein quality control in the inner membrane of the mitochondria by mediating degradation of mistranslated or misfolded polypeptides (PubMed:8681382). It also mediates protein maturation of the mitochondrial ribosomal subunit MRPL32/bL32m by catalyzing the cleavage of the presequence of MRPL32/bL32m prior to assembly into the mitochondrial ribosome (PubMed:16239145, PubMed:21610694). Promotes maturation of cytochrome c peroxidase (CCP1) by acting as a membrane protein dislocase via its ATPase activity: pulls the CCP1 transmembrane to the matrix prior to processing by the rhomboid protease PCP1 (PubMed:12417197, PubMed:17245427). The membrane protein dislocase activity is also required to dislocate moderately hydrophobic transmembrane segments from the membrane (PubMed:23283966, PubMed:29030426).</text>
</comment>
<comment type="catalytic activity">
    <reaction evidence="9 14">
        <text>ATP + H2O = ADP + phosphate + H(+)</text>
        <dbReference type="Rhea" id="RHEA:13065"/>
        <dbReference type="ChEBI" id="CHEBI:15377"/>
        <dbReference type="ChEBI" id="CHEBI:15378"/>
        <dbReference type="ChEBI" id="CHEBI:30616"/>
        <dbReference type="ChEBI" id="CHEBI:43474"/>
        <dbReference type="ChEBI" id="CHEBI:456216"/>
    </reaction>
    <physiologicalReaction direction="left-to-right" evidence="9 14">
        <dbReference type="Rhea" id="RHEA:13066"/>
    </physiologicalReaction>
</comment>
<comment type="cofactor">
    <cofactor evidence="2">
        <name>Zn(2+)</name>
        <dbReference type="ChEBI" id="CHEBI:29105"/>
    </cofactor>
    <text evidence="2">Binds 1 zinc ion per subunit.</text>
</comment>
<comment type="activity regulation">
    <text evidence="10">ATP hydrolysis is coordinated within m-AAA protease ring complexes: ATP-binding to YTA10/AFG3 inhibits ATP hydrolysis by the neighboring subunit YTA12/RCA1, leading to coordinated ATP hydrolysis within the AAA ATPase ring.</text>
</comment>
<comment type="subunit">
    <text evidence="5 10 14">Component of the 850 kDa m-AAA protease complex, a heterohexamer composed of YTA12/RCA1 and YTA10/AFG3 (PubMed:19748354, PubMed:8681382). Associates with the prohibitin complex, composed of PHB1 and PHB2, inhibiting the activity of the m-AAA protease complex (PubMed:10207067).</text>
</comment>
<comment type="interaction">
    <interactant intactId="EBI-2317">
        <id>P39925</id>
    </interactant>
    <interactant intactId="EBI-14858">
        <id>P40341</id>
        <label>YTA12</label>
    </interactant>
    <organismsDiffer>false</organismsDiffer>
    <experiments>4</experiments>
</comment>
<comment type="subcellular location">
    <subcellularLocation>
        <location evidence="14">Mitochondrion inner membrane</location>
        <topology evidence="3">Multi-pass membrane protein</topology>
    </subcellularLocation>
</comment>
<comment type="miscellaneous">
    <text evidence="7">Present with 3870 molecules/cell in log phase SD medium.</text>
</comment>
<comment type="similarity">
    <text evidence="18">In the N-terminal section; belongs to the AAA ATPase family.</text>
</comment>
<comment type="similarity">
    <text evidence="18">In the C-terminal section; belongs to the peptidase M41 family.</text>
</comment>
<gene>
    <name evidence="17 19" type="primary">AFG3</name>
    <name evidence="16" type="synonym">YTA10</name>
    <name type="ordered locus">YER017C</name>
</gene>
<proteinExistence type="evidence at protein level"/>
<protein>
    <recommendedName>
        <fullName evidence="18">Mitochondrial inner membrane m-AAA protease component YTA10</fullName>
        <ecNumber evidence="10 14">3.4.24.-</ecNumber>
        <ecNumber evidence="9 10">3.6.-.-</ecNumber>
    </recommendedName>
    <alternativeName>
        <fullName>ATPase family gene 3 protein</fullName>
    </alternativeName>
    <alternativeName>
        <fullName evidence="16">Tat-binding homolog 10</fullName>
    </alternativeName>
</protein>
<organism>
    <name type="scientific">Saccharomyces cerevisiae (strain ATCC 204508 / S288c)</name>
    <name type="common">Baker's yeast</name>
    <dbReference type="NCBI Taxonomy" id="559292"/>
    <lineage>
        <taxon>Eukaryota</taxon>
        <taxon>Fungi</taxon>
        <taxon>Dikarya</taxon>
        <taxon>Ascomycota</taxon>
        <taxon>Saccharomycotina</taxon>
        <taxon>Saccharomycetes</taxon>
        <taxon>Saccharomycetales</taxon>
        <taxon>Saccharomycetaceae</taxon>
        <taxon>Saccharomyces</taxon>
    </lineage>
</organism>
<feature type="chain" id="PRO_0000084670" description="Mitochondrial inner membrane m-AAA protease component YTA10">
    <location>
        <begin position="1"/>
        <end position="761"/>
    </location>
</feature>
<feature type="topological domain" description="Mitochondrial matrix" evidence="14">
    <location>
        <begin position="1"/>
        <end position="115"/>
    </location>
</feature>
<feature type="transmembrane region" description="Helical" evidence="3">
    <location>
        <begin position="116"/>
        <end position="136"/>
    </location>
</feature>
<feature type="topological domain" description="Mitochondrial intermembrane" evidence="14">
    <location>
        <begin position="137"/>
        <end position="223"/>
    </location>
</feature>
<feature type="transmembrane region" description="Helical" evidence="3">
    <location>
        <begin position="224"/>
        <end position="244"/>
    </location>
</feature>
<feature type="topological domain" description="Mitochondrial matrix" evidence="14">
    <location>
        <begin position="245"/>
        <end position="761"/>
    </location>
</feature>
<feature type="region of interest" description="Disordered" evidence="4">
    <location>
        <begin position="67"/>
        <end position="101"/>
    </location>
</feature>
<feature type="compositionally biased region" description="Basic and acidic residues" evidence="4">
    <location>
        <begin position="72"/>
        <end position="82"/>
    </location>
</feature>
<feature type="compositionally biased region" description="Basic and acidic residues" evidence="4">
    <location>
        <begin position="91"/>
        <end position="101"/>
    </location>
</feature>
<feature type="active site" evidence="1">
    <location>
        <position position="559"/>
    </location>
</feature>
<feature type="binding site" evidence="2">
    <location>
        <position position="290"/>
    </location>
    <ligand>
        <name>ATP</name>
        <dbReference type="ChEBI" id="CHEBI:30616"/>
    </ligand>
</feature>
<feature type="binding site" evidence="2">
    <location>
        <position position="291"/>
    </location>
    <ligand>
        <name>ATP</name>
        <dbReference type="ChEBI" id="CHEBI:30616"/>
    </ligand>
</feature>
<feature type="binding site" evidence="2">
    <location>
        <position position="332"/>
    </location>
    <ligand>
        <name>ATP</name>
        <dbReference type="ChEBI" id="CHEBI:30616"/>
    </ligand>
</feature>
<feature type="binding site" evidence="2">
    <location>
        <position position="333"/>
    </location>
    <ligand>
        <name>ATP</name>
        <dbReference type="ChEBI" id="CHEBI:30616"/>
    </ligand>
</feature>
<feature type="binding site" evidence="2">
    <location>
        <position position="334"/>
    </location>
    <ligand>
        <name>ATP</name>
        <dbReference type="ChEBI" id="CHEBI:30616"/>
    </ligand>
</feature>
<feature type="binding site" evidence="2">
    <location>
        <position position="335"/>
    </location>
    <ligand>
        <name>ATP</name>
        <dbReference type="ChEBI" id="CHEBI:30616"/>
    </ligand>
</feature>
<feature type="binding site" evidence="2">
    <location>
        <position position="336"/>
    </location>
    <ligand>
        <name>ATP</name>
        <dbReference type="ChEBI" id="CHEBI:30616"/>
    </ligand>
</feature>
<feature type="binding site" evidence="2">
    <location>
        <position position="472"/>
    </location>
    <ligand>
        <name>ATP</name>
        <dbReference type="ChEBI" id="CHEBI:30616"/>
    </ligand>
</feature>
<feature type="binding site" evidence="2">
    <location>
        <position position="558"/>
    </location>
    <ligand>
        <name>Zn(2+)</name>
        <dbReference type="ChEBI" id="CHEBI:29105"/>
        <note>catalytic</note>
    </ligand>
</feature>
<feature type="binding site" evidence="2">
    <location>
        <position position="562"/>
    </location>
    <ligand>
        <name>Zn(2+)</name>
        <dbReference type="ChEBI" id="CHEBI:29105"/>
        <note>catalytic</note>
    </ligand>
</feature>
<feature type="binding site" evidence="2">
    <location>
        <position position="634"/>
    </location>
    <ligand>
        <name>Zn(2+)</name>
        <dbReference type="ChEBI" id="CHEBI:29105"/>
        <note>catalytic</note>
    </ligand>
</feature>
<feature type="mutagenesis site" description="Slightly impaired respiratory growth. Impaired maturation of CCP1." evidence="10">
    <original>K</original>
    <variation>A</variation>
    <location>
        <position position="334"/>
    </location>
</feature>
<feature type="mutagenesis site" description="Slightly decreased ATPase activity, highly impaired maturation of CCP1." evidence="9">
    <original>M</original>
    <variation>K</variation>
    <location>
        <position position="360"/>
    </location>
</feature>
<feature type="mutagenesis site" description="Decreased ATPase activity and maturation of CCP1." evidence="9">
    <original>F</original>
    <variation>A</variation>
    <variation>E</variation>
    <location>
        <position position="361"/>
    </location>
</feature>
<feature type="mutagenesis site" description="Impaired maturation of CCP1." evidence="9">
    <original>G</original>
    <variation>A</variation>
    <location>
        <position position="363"/>
    </location>
</feature>
<feature type="mutagenesis site" description="Abolished ATPase activity, leading to impaired respiratory growth. Does not affect the protease activity." evidence="10">
    <original>E</original>
    <variation>Q</variation>
    <location>
        <position position="388"/>
    </location>
</feature>
<feature type="mutagenesis site" description="Suppressor mutation; able to complement a mutation in the Walker B motif of YTA12." evidence="10">
    <original>R</original>
    <variation>G</variation>
    <variation>K</variation>
    <location>
        <position position="447"/>
    </location>
</feature>
<feature type="mutagenesis site" description="Abolishes proteolytic activity; impairs synthesis of respiratory chain proteins COB and COX1. No effect on m-AAA protease assembly. Decreased ATPase activity and maturation of CCP1." evidence="9 15">
    <original>E</original>
    <variation>Q</variation>
    <location>
        <position position="559"/>
    </location>
</feature>
<feature type="mutagenesis site" description="Does not affect maturation of CCP1." evidence="9">
    <original>D</original>
    <variation>A</variation>
    <location>
        <position position="634"/>
    </location>
</feature>
<feature type="sequence conflict" description="In Ref. 1; CAA54091." evidence="18" ref="1">
    <original>A</original>
    <variation>R</variation>
    <location>
        <position position="411"/>
    </location>
</feature>
<name>AFG3_YEAST</name>
<accession>P39925</accession>
<accession>D3DLR5</accession>
<keyword id="KW-0067">ATP-binding</keyword>
<keyword id="KW-0378">Hydrolase</keyword>
<keyword id="KW-0472">Membrane</keyword>
<keyword id="KW-0479">Metal-binding</keyword>
<keyword id="KW-0482">Metalloprotease</keyword>
<keyword id="KW-0496">Mitochondrion</keyword>
<keyword id="KW-0999">Mitochondrion inner membrane</keyword>
<keyword id="KW-0547">Nucleotide-binding</keyword>
<keyword id="KW-0645">Protease</keyword>
<keyword id="KW-1185">Reference proteome</keyword>
<keyword id="KW-0812">Transmembrane</keyword>
<keyword id="KW-1133">Transmembrane helix</keyword>
<keyword id="KW-0862">Zinc</keyword>
<sequence>MMMWQRYARGAPRSLTSLSFGKASRISTVKPVLRSRMPVHQRLQTLSGLATRNTIHRSTQIRSFHISWTRLNENRPNKEGEGKNNGNKDNNSNKEDGKDKRNEFGSLSEYFRSKEFANTMFLTIGFTIIFTLLTPSSNNSGDDSNRVLTFQDFKTKYLEKGLVSKIYVVNKFLVEAELVNTKQVVSFTIGSVDIFEEQMDQIQDLLNIPPRDRIPIKYIERSSPFTFLFPFLPTIILLGGLYFITRKINSSPPNANGGGGGGLGGMFNVGKSRAKLFNKETDIKISFKNVAGCDEAKQEIMEFVHFLKNPGKYTKLGAKIPRGAILSGPPGTGKTLLAKATAGEANVPFLSVSGSEFVEMFVGVGASRVRDLFTQARSMAPSIIFIDEIDAIGKERGKGGALGGANDEREATLNQLLVEMDGFTTSDQVVVLAGTNRPDVLDNALMRPGRFDRHIQIDSPDVNGRQQIYLVHLKRLNLDPLLTDDMNNLSGKLATLTPGFTGADIANACNEAALIAARHNDPYITIHHFEQAIERVIAGLEKKTRVLSKEEKRSVAYHEAGHAVCGWFLKYADPLLKVSIIPRGQGALGYAQYLPPDQYLISEEQFRHRMIMALGGRVSEELHFPSVTSGAHDDFKKVTQMANAMVTSLGMSPKIGYLSFDQNDGNFKVNKPFSNKTARTIDLEVKSIVDDAHRACTELLTKNLDKVDLVAKELLRKEAITREDMIRLLGPRPFKERNEAFEKYLDPKSNTEPPEAPAATN</sequence>